<sequence>MKPVIDIAVEAEAWESFEDPATLAETVIVQTISQSGAKLAAEAEISIVFCDDAFIADLNRKWRGVDKPTNVLSFPSGGPIAVTPVLGDIVIAYETTEREAQEAGKPFRDHVAHLIAHGFLHLIGYDHLAAADAEAMEALERSVLARLGIDDPYQEPLASVEDGLAPVKGPLTSVKE</sequence>
<dbReference type="EC" id="3.1.-.-" evidence="1"/>
<dbReference type="EMBL" id="CP001280">
    <property type="protein sequence ID" value="ACK51811.1"/>
    <property type="molecule type" value="Genomic_DNA"/>
</dbReference>
<dbReference type="RefSeq" id="WP_012591880.1">
    <property type="nucleotide sequence ID" value="NC_011666.1"/>
</dbReference>
<dbReference type="SMR" id="B8ETG9"/>
<dbReference type="STRING" id="395965.Msil_2895"/>
<dbReference type="KEGG" id="msl:Msil_2895"/>
<dbReference type="eggNOG" id="COG0319">
    <property type="taxonomic scope" value="Bacteria"/>
</dbReference>
<dbReference type="HOGENOM" id="CLU_106710_0_0_5"/>
<dbReference type="OrthoDB" id="9807740at2"/>
<dbReference type="Proteomes" id="UP000002257">
    <property type="component" value="Chromosome"/>
</dbReference>
<dbReference type="GO" id="GO:0005737">
    <property type="term" value="C:cytoplasm"/>
    <property type="evidence" value="ECO:0007669"/>
    <property type="project" value="UniProtKB-SubCell"/>
</dbReference>
<dbReference type="GO" id="GO:0004222">
    <property type="term" value="F:metalloendopeptidase activity"/>
    <property type="evidence" value="ECO:0007669"/>
    <property type="project" value="InterPro"/>
</dbReference>
<dbReference type="GO" id="GO:0004521">
    <property type="term" value="F:RNA endonuclease activity"/>
    <property type="evidence" value="ECO:0007669"/>
    <property type="project" value="UniProtKB-UniRule"/>
</dbReference>
<dbReference type="GO" id="GO:0008270">
    <property type="term" value="F:zinc ion binding"/>
    <property type="evidence" value="ECO:0007669"/>
    <property type="project" value="UniProtKB-UniRule"/>
</dbReference>
<dbReference type="GO" id="GO:0006364">
    <property type="term" value="P:rRNA processing"/>
    <property type="evidence" value="ECO:0007669"/>
    <property type="project" value="UniProtKB-UniRule"/>
</dbReference>
<dbReference type="Gene3D" id="3.40.390.30">
    <property type="entry name" value="Metalloproteases ('zincins'), catalytic domain"/>
    <property type="match status" value="1"/>
</dbReference>
<dbReference type="HAMAP" id="MF_00009">
    <property type="entry name" value="Endoribonucl_YbeY"/>
    <property type="match status" value="1"/>
</dbReference>
<dbReference type="InterPro" id="IPR023091">
    <property type="entry name" value="MetalPrtase_cat_dom_sf_prd"/>
</dbReference>
<dbReference type="InterPro" id="IPR002036">
    <property type="entry name" value="YbeY"/>
</dbReference>
<dbReference type="InterPro" id="IPR020549">
    <property type="entry name" value="YbeY_CS"/>
</dbReference>
<dbReference type="NCBIfam" id="TIGR00043">
    <property type="entry name" value="rRNA maturation RNase YbeY"/>
    <property type="match status" value="1"/>
</dbReference>
<dbReference type="PANTHER" id="PTHR46986">
    <property type="entry name" value="ENDORIBONUCLEASE YBEY, CHLOROPLASTIC"/>
    <property type="match status" value="1"/>
</dbReference>
<dbReference type="PANTHER" id="PTHR46986:SF1">
    <property type="entry name" value="ENDORIBONUCLEASE YBEY, CHLOROPLASTIC"/>
    <property type="match status" value="1"/>
</dbReference>
<dbReference type="Pfam" id="PF02130">
    <property type="entry name" value="YbeY"/>
    <property type="match status" value="1"/>
</dbReference>
<dbReference type="SUPFAM" id="SSF55486">
    <property type="entry name" value="Metalloproteases ('zincins'), catalytic domain"/>
    <property type="match status" value="1"/>
</dbReference>
<dbReference type="PROSITE" id="PS01306">
    <property type="entry name" value="UPF0054"/>
    <property type="match status" value="1"/>
</dbReference>
<protein>
    <recommendedName>
        <fullName evidence="1">Endoribonuclease YbeY</fullName>
        <ecNumber evidence="1">3.1.-.-</ecNumber>
    </recommendedName>
</protein>
<gene>
    <name evidence="1" type="primary">ybeY</name>
    <name type="ordered locus">Msil_2895</name>
</gene>
<keyword id="KW-0963">Cytoplasm</keyword>
<keyword id="KW-0255">Endonuclease</keyword>
<keyword id="KW-0378">Hydrolase</keyword>
<keyword id="KW-0479">Metal-binding</keyword>
<keyword id="KW-0540">Nuclease</keyword>
<keyword id="KW-1185">Reference proteome</keyword>
<keyword id="KW-0690">Ribosome biogenesis</keyword>
<keyword id="KW-0698">rRNA processing</keyword>
<keyword id="KW-0862">Zinc</keyword>
<reference key="1">
    <citation type="journal article" date="2010" name="J. Bacteriol.">
        <title>Complete genome sequence of the aerobic facultative methanotroph Methylocella silvestris BL2.</title>
        <authorList>
            <person name="Chen Y."/>
            <person name="Crombie A."/>
            <person name="Rahman M.T."/>
            <person name="Dedysh S.N."/>
            <person name="Liesack W."/>
            <person name="Stott M.B."/>
            <person name="Alam M."/>
            <person name="Theisen A.R."/>
            <person name="Murrell J.C."/>
            <person name="Dunfield P.F."/>
        </authorList>
    </citation>
    <scope>NUCLEOTIDE SEQUENCE [LARGE SCALE GENOMIC DNA]</scope>
    <source>
        <strain>DSM 15510 / CIP 108128 / LMG 27833 / NCIMB 13906 / BL2</strain>
    </source>
</reference>
<organism>
    <name type="scientific">Methylocella silvestris (strain DSM 15510 / CIP 108128 / LMG 27833 / NCIMB 13906 / BL2)</name>
    <dbReference type="NCBI Taxonomy" id="395965"/>
    <lineage>
        <taxon>Bacteria</taxon>
        <taxon>Pseudomonadati</taxon>
        <taxon>Pseudomonadota</taxon>
        <taxon>Alphaproteobacteria</taxon>
        <taxon>Hyphomicrobiales</taxon>
        <taxon>Beijerinckiaceae</taxon>
        <taxon>Methylocella</taxon>
    </lineage>
</organism>
<accession>B8ETG9</accession>
<comment type="function">
    <text evidence="1">Single strand-specific metallo-endoribonuclease involved in late-stage 70S ribosome quality control and in maturation of the 3' terminus of the 16S rRNA.</text>
</comment>
<comment type="cofactor">
    <cofactor evidence="1">
        <name>Zn(2+)</name>
        <dbReference type="ChEBI" id="CHEBI:29105"/>
    </cofactor>
    <text evidence="1">Binds 1 zinc ion.</text>
</comment>
<comment type="subcellular location">
    <subcellularLocation>
        <location evidence="1">Cytoplasm</location>
    </subcellularLocation>
</comment>
<comment type="similarity">
    <text evidence="1">Belongs to the endoribonuclease YbeY family.</text>
</comment>
<feature type="chain" id="PRO_1000199983" description="Endoribonuclease YbeY">
    <location>
        <begin position="1"/>
        <end position="176"/>
    </location>
</feature>
<feature type="binding site" evidence="1">
    <location>
        <position position="117"/>
    </location>
    <ligand>
        <name>Zn(2+)</name>
        <dbReference type="ChEBI" id="CHEBI:29105"/>
        <note>catalytic</note>
    </ligand>
</feature>
<feature type="binding site" evidence="1">
    <location>
        <position position="121"/>
    </location>
    <ligand>
        <name>Zn(2+)</name>
        <dbReference type="ChEBI" id="CHEBI:29105"/>
        <note>catalytic</note>
    </ligand>
</feature>
<feature type="binding site" evidence="1">
    <location>
        <position position="127"/>
    </location>
    <ligand>
        <name>Zn(2+)</name>
        <dbReference type="ChEBI" id="CHEBI:29105"/>
        <note>catalytic</note>
    </ligand>
</feature>
<evidence type="ECO:0000255" key="1">
    <source>
        <dbReference type="HAMAP-Rule" id="MF_00009"/>
    </source>
</evidence>
<proteinExistence type="inferred from homology"/>
<name>YBEY_METSB</name>